<comment type="function">
    <text evidence="1">Required for normal formation of eisosomes, large cytoplasmic protein assemblies that localize to specialized domains on plasma membrane and mark the site of endocytosis.</text>
</comment>
<comment type="subcellular location">
    <subcellularLocation>
        <location evidence="1">Cytoplasmic granule</location>
    </subcellularLocation>
    <subcellularLocation>
        <location evidence="1">Cell membrane</location>
        <topology evidence="1">Peripheral membrane protein</topology>
        <orientation evidence="1">Cytoplasmic side</orientation>
    </subcellularLocation>
    <text evidence="1">Localizes at the eisosomes.</text>
</comment>
<comment type="similarity">
    <text evidence="4">Belongs to the EIS1 family.</text>
</comment>
<keyword id="KW-0007">Acetylation</keyword>
<keyword id="KW-1003">Cell membrane</keyword>
<keyword id="KW-0472">Membrane</keyword>
<keyword id="KW-0597">Phosphoprotein</keyword>
<protein>
    <recommendedName>
        <fullName>Eisosome protein 1</fullName>
    </recommendedName>
</protein>
<feature type="initiator methionine" description="Removed" evidence="2">
    <location>
        <position position="1"/>
    </location>
</feature>
<feature type="chain" id="PRO_0000410805" description="Eisosome protein 1">
    <location>
        <begin position="2"/>
        <end position="843"/>
    </location>
</feature>
<feature type="region of interest" description="Disordered" evidence="3">
    <location>
        <begin position="1"/>
        <end position="53"/>
    </location>
</feature>
<feature type="region of interest" description="Disordered" evidence="3">
    <location>
        <begin position="120"/>
        <end position="174"/>
    </location>
</feature>
<feature type="region of interest" description="Disordered" evidence="3">
    <location>
        <begin position="718"/>
        <end position="843"/>
    </location>
</feature>
<feature type="compositionally biased region" description="Basic residues" evidence="3">
    <location>
        <begin position="33"/>
        <end position="46"/>
    </location>
</feature>
<feature type="compositionally biased region" description="Polar residues" evidence="3">
    <location>
        <begin position="127"/>
        <end position="137"/>
    </location>
</feature>
<feature type="compositionally biased region" description="Polar residues" evidence="3">
    <location>
        <begin position="163"/>
        <end position="174"/>
    </location>
</feature>
<feature type="compositionally biased region" description="Basic and acidic residues" evidence="3">
    <location>
        <begin position="781"/>
        <end position="797"/>
    </location>
</feature>
<feature type="compositionally biased region" description="Polar residues" evidence="3">
    <location>
        <begin position="798"/>
        <end position="810"/>
    </location>
</feature>
<feature type="modified residue" description="N-acetylserine" evidence="2">
    <location>
        <position position="2"/>
    </location>
</feature>
<feature type="modified residue" description="Phosphoserine" evidence="2">
    <location>
        <position position="2"/>
    </location>
</feature>
<feature type="modified residue" description="Phosphoserine" evidence="2">
    <location>
        <position position="88"/>
    </location>
</feature>
<feature type="modified residue" description="Phosphoserine" evidence="2">
    <location>
        <position position="130"/>
    </location>
</feature>
<feature type="modified residue" description="Phosphoserine" evidence="2">
    <location>
        <position position="182"/>
    </location>
</feature>
<feature type="modified residue" description="Phosphoserine" evidence="2">
    <location>
        <position position="401"/>
    </location>
</feature>
<feature type="modified residue" description="Phosphoserine" evidence="2">
    <location>
        <position position="584"/>
    </location>
</feature>
<feature type="modified residue" description="Phosphoserine" evidence="2">
    <location>
        <position position="710"/>
    </location>
</feature>
<feature type="modified residue" description="Phosphothreonine" evidence="2">
    <location>
        <position position="720"/>
    </location>
</feature>
<feature type="modified residue" description="Phosphoserine" evidence="2">
    <location>
        <position position="763"/>
    </location>
</feature>
<feature type="modified residue" description="Phosphoserine" evidence="2">
    <location>
        <position position="775"/>
    </location>
</feature>
<feature type="modified residue" description="Phosphoserine" evidence="2">
    <location>
        <position position="816"/>
    </location>
</feature>
<feature type="modified residue" description="Phosphoserine" evidence="2">
    <location>
        <position position="828"/>
    </location>
</feature>
<feature type="modified residue" description="Phosphoserine" evidence="2">
    <location>
        <position position="829"/>
    </location>
</feature>
<feature type="modified residue" description="Phosphoserine" evidence="2">
    <location>
        <position position="838"/>
    </location>
</feature>
<organism>
    <name type="scientific">Saccharomyces cerevisiae (strain YJM789)</name>
    <name type="common">Baker's yeast</name>
    <dbReference type="NCBI Taxonomy" id="307796"/>
    <lineage>
        <taxon>Eukaryota</taxon>
        <taxon>Fungi</taxon>
        <taxon>Dikarya</taxon>
        <taxon>Ascomycota</taxon>
        <taxon>Saccharomycotina</taxon>
        <taxon>Saccharomycetes</taxon>
        <taxon>Saccharomycetales</taxon>
        <taxon>Saccharomycetaceae</taxon>
        <taxon>Saccharomyces</taxon>
    </lineage>
</organism>
<proteinExistence type="inferred from homology"/>
<gene>
    <name type="primary">EIS1</name>
    <name type="ORF">SCY_4205</name>
</gene>
<reference key="1">
    <citation type="journal article" date="2007" name="Proc. Natl. Acad. Sci. U.S.A.">
        <title>Genome sequencing and comparative analysis of Saccharomyces cerevisiae strain YJM789.</title>
        <authorList>
            <person name="Wei W."/>
            <person name="McCusker J.H."/>
            <person name="Hyman R.W."/>
            <person name="Jones T."/>
            <person name="Ning Y."/>
            <person name="Cao Z."/>
            <person name="Gu Z."/>
            <person name="Bruno D."/>
            <person name="Miranda M."/>
            <person name="Nguyen M."/>
            <person name="Wilhelmy J."/>
            <person name="Komp C."/>
            <person name="Tamse R."/>
            <person name="Wang X."/>
            <person name="Jia P."/>
            <person name="Luedi P."/>
            <person name="Oefner P.J."/>
            <person name="David L."/>
            <person name="Dietrich F.S."/>
            <person name="Li Y."/>
            <person name="Davis R.W."/>
            <person name="Steinmetz L.M."/>
        </authorList>
    </citation>
    <scope>NUCLEOTIDE SEQUENCE [LARGE SCALE GENOMIC DNA]</scope>
    <source>
        <strain>YJM789</strain>
    </source>
</reference>
<name>EIS1_YEAS7</name>
<accession>A6ZM93</accession>
<dbReference type="EMBL" id="AAFW02000020">
    <property type="protein sequence ID" value="EDN64423.1"/>
    <property type="molecule type" value="Genomic_DNA"/>
</dbReference>
<dbReference type="SMR" id="A6ZM93"/>
<dbReference type="HOGENOM" id="CLU_013228_0_0_1"/>
<dbReference type="OrthoDB" id="24780at4893"/>
<dbReference type="Proteomes" id="UP000007060">
    <property type="component" value="Unassembled WGS sequence"/>
</dbReference>
<dbReference type="GO" id="GO:0005886">
    <property type="term" value="C:plasma membrane"/>
    <property type="evidence" value="ECO:0007669"/>
    <property type="project" value="UniProtKB-SubCell"/>
</dbReference>
<dbReference type="GO" id="GO:0070941">
    <property type="term" value="P:eisosome assembly"/>
    <property type="evidence" value="ECO:0007669"/>
    <property type="project" value="TreeGrafter"/>
</dbReference>
<dbReference type="InterPro" id="IPR024527">
    <property type="entry name" value="Eisosome1"/>
</dbReference>
<dbReference type="PANTHER" id="PTHR28298">
    <property type="entry name" value="EISOSOME PROTEIN 1"/>
    <property type="match status" value="1"/>
</dbReference>
<dbReference type="PANTHER" id="PTHR28298:SF1">
    <property type="entry name" value="EISOSOME PROTEIN 1"/>
    <property type="match status" value="1"/>
</dbReference>
<dbReference type="Pfam" id="PF12757">
    <property type="entry name" value="Eisosome1"/>
    <property type="match status" value="1"/>
</dbReference>
<evidence type="ECO:0000250" key="1"/>
<evidence type="ECO:0000250" key="2">
    <source>
        <dbReference type="UniProtKB" id="Q05050"/>
    </source>
</evidence>
<evidence type="ECO:0000256" key="3">
    <source>
        <dbReference type="SAM" id="MobiDB-lite"/>
    </source>
</evidence>
<evidence type="ECO:0000305" key="4"/>
<sequence>MSLISAVEDRDIHNIGKTSGGGSRTSSITSSKKSLKHGSKSLRKPKVYQTTGEPLSREALYKAKLKYGVYQSPAQSYSIGVSDAHAASDKAANLAHDNQTTVEAYKRMFIDPNATKAASKMGPKVVRNNSITSATSKTSKESQTKRKSKESPGAAASKAYSMTMETTSLSSQTNSRSYSITSASSVLSGASGSFNSTVNPKPKTLNLEKVLVGAEKKAESRIKERWEPEKTNFQYGVKTDEHGNLNQFSFSNEMMNNIMAKVDAPKAQDLQKVKKVSAEKEAKSMKFALGAANAVKDMHPGADIDKSIALKAQKRETYLSQLTSQQVLTLARANVDRQLDIIEKSDMHRKLFTNMEYNKAAVAVAQSNHQKKTEFHNKINMGGGLFLSPEDITKIASGLISPVLGEVSERAEAQRAMDEEIAERTEAYNKSLNEWETMERSIISNDAKVLTTTANRHQTEKKTSQEKIKASFDALVARMDTKVAERETLLEDTKNKEIEFKKQMQQELKDEKARLDQDLEEWGKKCEQDITEARKEQEELLKPYHDDLANAEAEHKTLVEERDAINAEISRLQDAIVDHKRKISGYGNDLDAQKNRNIREDDKLLELGQTKESLESHLNDDVIILANKAKEQAELSTKEARLKQLEVDSLINERKSELNATEIELKKEKLNLLEAMKDVASARGDDKIAEEKVKKLIGMTSEEYLTQNKSVEKNVEDLPTQLEKIEEGDELKKEEIVGAETKNSGGDGVPVSTGAKEAAETSSAVQTKEPEEKISIGNKSSGKEDANDCESAEHSKEISVSQKAGNNKSLGVSPDSLEHTFSGFSQGSSIEDDQDAISNQEKK</sequence>